<gene>
    <name type="primary">rhbg</name>
</gene>
<reference key="1">
    <citation type="journal article" date="2005" name="Proc. Natl. Acad. Sci. U.S.A.">
        <title>Evolutionary conservation and diversification of Rh family genes and proteins.</title>
        <authorList>
            <person name="Huang C.-H."/>
            <person name="Peng J."/>
        </authorList>
    </citation>
    <scope>NUCLEOTIDE SEQUENCE [MRNA]</scope>
    <source>
        <tissue>Kidney</tissue>
    </source>
</reference>
<name>RHBG_ORYLA</name>
<feature type="chain" id="PRO_0000283608" description="Ammonium transporter Rh type B">
    <location>
        <begin position="1"/>
        <end position="462"/>
    </location>
</feature>
<feature type="topological domain" description="Cytoplasmic" evidence="2">
    <location>
        <begin position="1"/>
        <end position="11"/>
    </location>
</feature>
<feature type="transmembrane region" description="Helical" evidence="2">
    <location>
        <begin position="12"/>
        <end position="32"/>
    </location>
</feature>
<feature type="topological domain" description="Extracellular" evidence="2">
    <location>
        <begin position="33"/>
        <end position="62"/>
    </location>
</feature>
<feature type="transmembrane region" description="Helical" evidence="2">
    <location>
        <begin position="63"/>
        <end position="83"/>
    </location>
</feature>
<feature type="topological domain" description="Cytoplasmic" evidence="2">
    <location>
        <begin position="84"/>
        <end position="94"/>
    </location>
</feature>
<feature type="transmembrane region" description="Helical" evidence="2">
    <location>
        <begin position="95"/>
        <end position="115"/>
    </location>
</feature>
<feature type="topological domain" description="Extracellular" evidence="2">
    <location>
        <begin position="116"/>
        <end position="125"/>
    </location>
</feature>
<feature type="transmembrane region" description="Helical" evidence="2">
    <location>
        <begin position="126"/>
        <end position="146"/>
    </location>
</feature>
<feature type="topological domain" description="Cytoplasmic" evidence="2">
    <location>
        <begin position="147"/>
        <end position="152"/>
    </location>
</feature>
<feature type="transmembrane region" description="Helical" evidence="2">
    <location>
        <begin position="153"/>
        <end position="173"/>
    </location>
</feature>
<feature type="topological domain" description="Extracellular" evidence="2">
    <location>
        <begin position="174"/>
        <end position="180"/>
    </location>
</feature>
<feature type="transmembrane region" description="Helical" evidence="2">
    <location>
        <begin position="181"/>
        <end position="201"/>
    </location>
</feature>
<feature type="topological domain" description="Cytoplasmic" evidence="2">
    <location>
        <begin position="202"/>
        <end position="220"/>
    </location>
</feature>
<feature type="transmembrane region" description="Helical" evidence="2">
    <location>
        <begin position="221"/>
        <end position="241"/>
    </location>
</feature>
<feature type="topological domain" description="Extracellular" evidence="2">
    <location>
        <begin position="242"/>
        <end position="302"/>
    </location>
</feature>
<feature type="transmembrane region" description="Helical" evidence="2">
    <location>
        <begin position="303"/>
        <end position="323"/>
    </location>
</feature>
<feature type="topological domain" description="Cytoplasmic" evidence="2">
    <location>
        <begin position="324"/>
        <end position="344"/>
    </location>
</feature>
<feature type="transmembrane region" description="Helical" evidence="2">
    <location>
        <begin position="345"/>
        <end position="365"/>
    </location>
</feature>
<feature type="topological domain" description="Extracellular" evidence="2">
    <location>
        <begin position="366"/>
        <end position="395"/>
    </location>
</feature>
<feature type="transmembrane region" description="Helical" evidence="2">
    <location>
        <begin position="396"/>
        <end position="416"/>
    </location>
</feature>
<feature type="topological domain" description="Cytoplasmic" evidence="2">
    <location>
        <begin position="417"/>
        <end position="462"/>
    </location>
</feature>
<feature type="region of interest" description="Disordered" evidence="3">
    <location>
        <begin position="441"/>
        <end position="462"/>
    </location>
</feature>
<feature type="compositionally biased region" description="Basic and acidic residues" evidence="3">
    <location>
        <begin position="453"/>
        <end position="462"/>
    </location>
</feature>
<feature type="glycosylation site" description="N-linked (GlcNAc...) asparagine" evidence="2">
    <location>
        <position position="46"/>
    </location>
</feature>
<sequence>MTDPSTNMRLKLPITCFILQIILIILFGVLVQYDEDTDAKKHHHGNHSESKSDIENDFYYRYPSFQDVHVMIFVGFGFLMTFLQRYGFSSVGFNFLIAAFSLQWATLMQGFFHGLHEGKIHIGVESMINADFCTGSVLISFGAVLGKTSPVQLLFMAVFEVTLFAVNEFILLTLLGTKDAGGSMTIHTFGAYFGLMVTRILYRPNLDKSKHKNCSVYHSDLFAMIGTLYLWMFWPSFNSAVTEHGDPQHRTAMNTYYSLAACTLSTYAMSSLTAHDGKLDMVHIQNAALAGGVAAGTAGEMMLTPFGSMIVGFLAGIISVLGFKYLTPILENKLKIQDTCGIHNLHGMPGVLGAIVGAVTASLASKEVYGEGLEKVFPDVASGKRTASDQGGVQAISLAVTLGMALFGGLIVGFILKLPIFGAPRDTTCFEDSLYWEVPGEEESHEDQLTTVKTEESDKLNS</sequence>
<organism>
    <name type="scientific">Oryzias latipes</name>
    <name type="common">Japanese rice fish</name>
    <name type="synonym">Japanese killifish</name>
    <dbReference type="NCBI Taxonomy" id="8090"/>
    <lineage>
        <taxon>Eukaryota</taxon>
        <taxon>Metazoa</taxon>
        <taxon>Chordata</taxon>
        <taxon>Craniata</taxon>
        <taxon>Vertebrata</taxon>
        <taxon>Euteleostomi</taxon>
        <taxon>Actinopterygii</taxon>
        <taxon>Neopterygii</taxon>
        <taxon>Teleostei</taxon>
        <taxon>Neoteleostei</taxon>
        <taxon>Acanthomorphata</taxon>
        <taxon>Ovalentaria</taxon>
        <taxon>Atherinomorphae</taxon>
        <taxon>Beloniformes</taxon>
        <taxon>Adrianichthyidae</taxon>
        <taxon>Oryziinae</taxon>
        <taxon>Oryzias</taxon>
    </lineage>
</organism>
<accession>Q69D47</accession>
<protein>
    <recommendedName>
        <fullName>Ammonium transporter Rh type B</fullName>
    </recommendedName>
    <alternativeName>
        <fullName>Rhesus blood group family type B glycoprotein</fullName>
        <shortName>Rh family type B glycoprotein</shortName>
        <shortName>Rh type B glycoprotein</shortName>
    </alternativeName>
</protein>
<keyword id="KW-0924">Ammonia transport</keyword>
<keyword id="KW-1003">Cell membrane</keyword>
<keyword id="KW-0968">Cytoplasmic vesicle</keyword>
<keyword id="KW-0325">Glycoprotein</keyword>
<keyword id="KW-0472">Membrane</keyword>
<keyword id="KW-1185">Reference proteome</keyword>
<keyword id="KW-0812">Transmembrane</keyword>
<keyword id="KW-1133">Transmembrane helix</keyword>
<keyword id="KW-0813">Transport</keyword>
<dbReference type="EMBL" id="AY353247">
    <property type="protein sequence ID" value="AAR08676.1"/>
    <property type="molecule type" value="mRNA"/>
</dbReference>
<dbReference type="RefSeq" id="NP_001098561.1">
    <property type="nucleotide sequence ID" value="NM_001105091.1"/>
</dbReference>
<dbReference type="SMR" id="Q69D47"/>
<dbReference type="FunCoup" id="Q69D47">
    <property type="interactions" value="75"/>
</dbReference>
<dbReference type="STRING" id="8090.ENSORLP00000019528"/>
<dbReference type="GlyCosmos" id="Q69D47">
    <property type="glycosylation" value="1 site, No reported glycans"/>
</dbReference>
<dbReference type="GeneID" id="100125813"/>
<dbReference type="KEGG" id="ola:100125813"/>
<dbReference type="CTD" id="57127"/>
<dbReference type="eggNOG" id="KOG3796">
    <property type="taxonomic scope" value="Eukaryota"/>
</dbReference>
<dbReference type="InParanoid" id="Q69D47"/>
<dbReference type="OrthoDB" id="534912at2759"/>
<dbReference type="Proteomes" id="UP000001038">
    <property type="component" value="Unplaced"/>
</dbReference>
<dbReference type="Proteomes" id="UP000265180">
    <property type="component" value="Chromosome 9"/>
</dbReference>
<dbReference type="Proteomes" id="UP000265200">
    <property type="component" value="Chromosome 9"/>
</dbReference>
<dbReference type="GO" id="GO:0016323">
    <property type="term" value="C:basolateral plasma membrane"/>
    <property type="evidence" value="ECO:0007669"/>
    <property type="project" value="UniProtKB-SubCell"/>
</dbReference>
<dbReference type="GO" id="GO:0030659">
    <property type="term" value="C:cytoplasmic vesicle membrane"/>
    <property type="evidence" value="ECO:0007669"/>
    <property type="project" value="UniProtKB-SubCell"/>
</dbReference>
<dbReference type="GO" id="GO:0005886">
    <property type="term" value="C:plasma membrane"/>
    <property type="evidence" value="ECO:0000318"/>
    <property type="project" value="GO_Central"/>
</dbReference>
<dbReference type="GO" id="GO:0008519">
    <property type="term" value="F:ammonium channel activity"/>
    <property type="evidence" value="ECO:0000318"/>
    <property type="project" value="GO_Central"/>
</dbReference>
<dbReference type="GO" id="GO:0097272">
    <property type="term" value="P:ammonium homeostasis"/>
    <property type="evidence" value="ECO:0000318"/>
    <property type="project" value="GO_Central"/>
</dbReference>
<dbReference type="GO" id="GO:0072488">
    <property type="term" value="P:ammonium transmembrane transport"/>
    <property type="evidence" value="ECO:0000318"/>
    <property type="project" value="GO_Central"/>
</dbReference>
<dbReference type="FunFam" id="1.10.3430.10:FF:000001">
    <property type="entry name" value="Ammonium transporter Rh type C"/>
    <property type="match status" value="1"/>
</dbReference>
<dbReference type="Gene3D" id="1.10.3430.10">
    <property type="entry name" value="Ammonium transporter AmtB like domains"/>
    <property type="match status" value="1"/>
</dbReference>
<dbReference type="InterPro" id="IPR029020">
    <property type="entry name" value="Ammonium/urea_transptr"/>
</dbReference>
<dbReference type="InterPro" id="IPR024041">
    <property type="entry name" value="NH4_transpt_AmtB-like_dom"/>
</dbReference>
<dbReference type="InterPro" id="IPR002229">
    <property type="entry name" value="RhesusRHD"/>
</dbReference>
<dbReference type="PANTHER" id="PTHR11730">
    <property type="entry name" value="AMMONIUM TRANSPORTER"/>
    <property type="match status" value="1"/>
</dbReference>
<dbReference type="PANTHER" id="PTHR11730:SF42">
    <property type="entry name" value="AMMONIUM TRANSPORTER RH TYPE B"/>
    <property type="match status" value="1"/>
</dbReference>
<dbReference type="Pfam" id="PF00909">
    <property type="entry name" value="Ammonium_transp"/>
    <property type="match status" value="1"/>
</dbReference>
<dbReference type="PRINTS" id="PR00342">
    <property type="entry name" value="RHESUSRHD"/>
</dbReference>
<dbReference type="SUPFAM" id="SSF111352">
    <property type="entry name" value="Ammonium transporter"/>
    <property type="match status" value="1"/>
</dbReference>
<evidence type="ECO:0000250" key="1"/>
<evidence type="ECO:0000255" key="2"/>
<evidence type="ECO:0000256" key="3">
    <source>
        <dbReference type="SAM" id="MobiDB-lite"/>
    </source>
</evidence>
<evidence type="ECO:0000305" key="4"/>
<proteinExistence type="evidence at transcript level"/>
<comment type="function">
    <text evidence="1">Functions as an ammonia transporter. May play a role in the elimination of ammonia in the gill (By similarity).</text>
</comment>
<comment type="subcellular location">
    <subcellularLocation>
        <location evidence="1">Basolateral cell membrane</location>
        <topology evidence="1">Multi-pass membrane protein</topology>
    </subcellularLocation>
    <subcellularLocation>
        <location evidence="1">Cytoplasmic vesicle membrane</location>
        <topology evidence="1">Multi-pass membrane protein</topology>
    </subcellularLocation>
</comment>
<comment type="similarity">
    <text evidence="4">Belongs to the ammonium transporter (TC 2.A.49) family. Rh subfamily.</text>
</comment>